<organism>
    <name type="scientific">Haemophilus influenzae (strain ATCC 51907 / DSM 11121 / KW20 / Rd)</name>
    <dbReference type="NCBI Taxonomy" id="71421"/>
    <lineage>
        <taxon>Bacteria</taxon>
        <taxon>Pseudomonadati</taxon>
        <taxon>Pseudomonadota</taxon>
        <taxon>Gammaproteobacteria</taxon>
        <taxon>Pasteurellales</taxon>
        <taxon>Pasteurellaceae</taxon>
        <taxon>Haemophilus</taxon>
    </lineage>
</organism>
<keyword id="KW-0227">DNA damage</keyword>
<keyword id="KW-0234">DNA repair</keyword>
<keyword id="KW-0238">DNA-binding</keyword>
<keyword id="KW-0326">Glycosidase</keyword>
<keyword id="KW-0378">Hydrolase</keyword>
<keyword id="KW-0456">Lyase</keyword>
<keyword id="KW-0479">Metal-binding</keyword>
<keyword id="KW-0511">Multifunctional enzyme</keyword>
<keyword id="KW-1185">Reference proteome</keyword>
<keyword id="KW-0862">Zinc</keyword>
<keyword id="KW-0863">Zinc-finger</keyword>
<accession>P44948</accession>
<gene>
    <name type="primary">mutM</name>
    <name type="synonym">fpg</name>
    <name type="ordered locus">HI_0946</name>
</gene>
<protein>
    <recommendedName>
        <fullName>Formamidopyrimidine-DNA glycosylase</fullName>
        <shortName>Fapy-DNA glycosylase</shortName>
        <ecNumber>3.2.2.23</ecNumber>
    </recommendedName>
    <alternativeName>
        <fullName>DNA-(apurinic or apyrimidinic site) lyase MutM</fullName>
        <shortName>AP lyase MutM</shortName>
        <ecNumber>4.2.99.18</ecNumber>
    </alternativeName>
</protein>
<sequence>MPELPEVETALRGISPYLKNFTIEKVVVRQPKLRWAVSEELITLKNVKIVDLTRRAKYLIIHTEKGYIIGHLGMSGSVRIVPQDSAIDKHDHIDIVVNNGKLLRYNDPRRFGAWLWTENLDDFHLFLKLGPEPLSDEFNAEYLFKKSRQKSTALKTFLMDNAVVVGVGNIYTNESLFICGIHPLKLAKNLTRNQCFSLVNTIKDVLRKAIIQGGTTLKDFLQPDGRPGYFAQELLVYGNKDKPCPKCGGKIESLIIGQRNSFFCPKCQKRG</sequence>
<feature type="initiator methionine" description="Removed" evidence="1">
    <location>
        <position position="1"/>
    </location>
</feature>
<feature type="chain" id="PRO_0000170828" description="Formamidopyrimidine-DNA glycosylase">
    <location>
        <begin position="2"/>
        <end position="271"/>
    </location>
</feature>
<feature type="zinc finger region" description="FPG-type">
    <location>
        <begin position="235"/>
        <end position="269"/>
    </location>
</feature>
<feature type="active site" description="Schiff-base intermediate with DNA" evidence="1">
    <location>
        <position position="2"/>
    </location>
</feature>
<feature type="active site" description="Proton donor" evidence="1">
    <location>
        <position position="3"/>
    </location>
</feature>
<feature type="active site" description="Proton donor; for beta-elimination activity" evidence="1">
    <location>
        <position position="57"/>
    </location>
</feature>
<feature type="active site" description="Proton donor; for delta-elimination activity" evidence="1">
    <location>
        <position position="259"/>
    </location>
</feature>
<feature type="binding site" evidence="1">
    <location>
        <position position="90"/>
    </location>
    <ligand>
        <name>DNA</name>
        <dbReference type="ChEBI" id="CHEBI:16991"/>
    </ligand>
</feature>
<feature type="binding site" evidence="1">
    <location>
        <position position="109"/>
    </location>
    <ligand>
        <name>DNA</name>
        <dbReference type="ChEBI" id="CHEBI:16991"/>
    </ligand>
</feature>
<feature type="binding site" evidence="1">
    <location>
        <position position="150"/>
    </location>
    <ligand>
        <name>DNA</name>
        <dbReference type="ChEBI" id="CHEBI:16991"/>
    </ligand>
</feature>
<comment type="function">
    <text evidence="1">Involved in base excision repair of DNA damaged by oxidation or by mutagenic agents. Acts as a DNA glycosylase that recognizes and removes damaged bases. Has a preference for oxidized purines, such as 7,8-dihydro-8-oxoguanine (8-oxoG). Has AP (apurinic/apyrimidinic) lyase activity and introduces nicks in the DNA strand. Cleaves the DNA backbone by beta-delta elimination to generate a single-strand break at the site of the removed base with both 3'- and 5'-phosphates (By similarity).</text>
</comment>
<comment type="catalytic activity">
    <reaction>
        <text>Hydrolysis of DNA containing ring-opened 7-methylguanine residues, releasing 2,6-diamino-4-hydroxy-5-(N-methyl)formamidopyrimidine.</text>
        <dbReference type="EC" id="3.2.2.23"/>
    </reaction>
</comment>
<comment type="catalytic activity">
    <reaction>
        <text>2'-deoxyribonucleotide-(2'-deoxyribose 5'-phosphate)-2'-deoxyribonucleotide-DNA = a 3'-end 2'-deoxyribonucleotide-(2,3-dehydro-2,3-deoxyribose 5'-phosphate)-DNA + a 5'-end 5'-phospho-2'-deoxyribonucleoside-DNA + H(+)</text>
        <dbReference type="Rhea" id="RHEA:66592"/>
        <dbReference type="Rhea" id="RHEA-COMP:13180"/>
        <dbReference type="Rhea" id="RHEA-COMP:16897"/>
        <dbReference type="Rhea" id="RHEA-COMP:17067"/>
        <dbReference type="ChEBI" id="CHEBI:15378"/>
        <dbReference type="ChEBI" id="CHEBI:136412"/>
        <dbReference type="ChEBI" id="CHEBI:157695"/>
        <dbReference type="ChEBI" id="CHEBI:167181"/>
        <dbReference type="EC" id="4.2.99.18"/>
    </reaction>
</comment>
<comment type="cofactor">
    <cofactor evidence="1">
        <name>Zn(2+)</name>
        <dbReference type="ChEBI" id="CHEBI:29105"/>
    </cofactor>
    <text evidence="1">Binds 1 zinc ion per subunit.</text>
</comment>
<comment type="subunit">
    <text evidence="1">Monomer.</text>
</comment>
<comment type="similarity">
    <text evidence="2">Belongs to the FPG family.</text>
</comment>
<evidence type="ECO:0000250" key="1"/>
<evidence type="ECO:0000305" key="2"/>
<reference key="1">
    <citation type="journal article" date="1995" name="Science">
        <title>Whole-genome random sequencing and assembly of Haemophilus influenzae Rd.</title>
        <authorList>
            <person name="Fleischmann R.D."/>
            <person name="Adams M.D."/>
            <person name="White O."/>
            <person name="Clayton R.A."/>
            <person name="Kirkness E.F."/>
            <person name="Kerlavage A.R."/>
            <person name="Bult C.J."/>
            <person name="Tomb J.-F."/>
            <person name="Dougherty B.A."/>
            <person name="Merrick J.M."/>
            <person name="McKenney K."/>
            <person name="Sutton G.G."/>
            <person name="FitzHugh W."/>
            <person name="Fields C.A."/>
            <person name="Gocayne J.D."/>
            <person name="Scott J.D."/>
            <person name="Shirley R."/>
            <person name="Liu L.-I."/>
            <person name="Glodek A."/>
            <person name="Kelley J.M."/>
            <person name="Weidman J.F."/>
            <person name="Phillips C.A."/>
            <person name="Spriggs T."/>
            <person name="Hedblom E."/>
            <person name="Cotton M.D."/>
            <person name="Utterback T.R."/>
            <person name="Hanna M.C."/>
            <person name="Nguyen D.T."/>
            <person name="Saudek D.M."/>
            <person name="Brandon R.C."/>
            <person name="Fine L.D."/>
            <person name="Fritchman J.L."/>
            <person name="Fuhrmann J.L."/>
            <person name="Geoghagen N.S.M."/>
            <person name="Gnehm C.L."/>
            <person name="McDonald L.A."/>
            <person name="Small K.V."/>
            <person name="Fraser C.M."/>
            <person name="Smith H.O."/>
            <person name="Venter J.C."/>
        </authorList>
    </citation>
    <scope>NUCLEOTIDE SEQUENCE [LARGE SCALE GENOMIC DNA]</scope>
    <source>
        <strain>ATCC 51907 / DSM 11121 / KW20 / Rd</strain>
    </source>
</reference>
<dbReference type="EC" id="3.2.2.23"/>
<dbReference type="EC" id="4.2.99.18"/>
<dbReference type="EMBL" id="L42023">
    <property type="protein sequence ID" value="AAC22606.1"/>
    <property type="molecule type" value="Genomic_DNA"/>
</dbReference>
<dbReference type="PIR" id="A64104">
    <property type="entry name" value="A64104"/>
</dbReference>
<dbReference type="RefSeq" id="NP_439106.1">
    <property type="nucleotide sequence ID" value="NC_000907.1"/>
</dbReference>
<dbReference type="SMR" id="P44948"/>
<dbReference type="STRING" id="71421.HI_0946"/>
<dbReference type="EnsemblBacteria" id="AAC22606">
    <property type="protein sequence ID" value="AAC22606"/>
    <property type="gene ID" value="HI_0946"/>
</dbReference>
<dbReference type="KEGG" id="hin:HI_0946"/>
<dbReference type="PATRIC" id="fig|71421.8.peg.987"/>
<dbReference type="eggNOG" id="COG0266">
    <property type="taxonomic scope" value="Bacteria"/>
</dbReference>
<dbReference type="HOGENOM" id="CLU_038423_1_1_6"/>
<dbReference type="OrthoDB" id="9800855at2"/>
<dbReference type="PhylomeDB" id="P44948"/>
<dbReference type="BioCyc" id="HINF71421:G1GJ1-986-MONOMER"/>
<dbReference type="Proteomes" id="UP000000579">
    <property type="component" value="Chromosome"/>
</dbReference>
<dbReference type="GO" id="GO:0034039">
    <property type="term" value="F:8-oxo-7,8-dihydroguanine DNA N-glycosylase activity"/>
    <property type="evidence" value="ECO:0000318"/>
    <property type="project" value="GO_Central"/>
</dbReference>
<dbReference type="GO" id="GO:0140078">
    <property type="term" value="F:class I DNA-(apurinic or apyrimidinic site) endonuclease activity"/>
    <property type="evidence" value="ECO:0007669"/>
    <property type="project" value="UniProtKB-EC"/>
</dbReference>
<dbReference type="GO" id="GO:0003684">
    <property type="term" value="F:damaged DNA binding"/>
    <property type="evidence" value="ECO:0007669"/>
    <property type="project" value="InterPro"/>
</dbReference>
<dbReference type="GO" id="GO:0003906">
    <property type="term" value="F:DNA-(apurinic or apyrimidinic site) endonuclease activity"/>
    <property type="evidence" value="ECO:0000318"/>
    <property type="project" value="GO_Central"/>
</dbReference>
<dbReference type="GO" id="GO:0008270">
    <property type="term" value="F:zinc ion binding"/>
    <property type="evidence" value="ECO:0007669"/>
    <property type="project" value="UniProtKB-UniRule"/>
</dbReference>
<dbReference type="GO" id="GO:0006284">
    <property type="term" value="P:base-excision repair"/>
    <property type="evidence" value="ECO:0000318"/>
    <property type="project" value="GO_Central"/>
</dbReference>
<dbReference type="CDD" id="cd08966">
    <property type="entry name" value="EcFpg-like_N"/>
    <property type="match status" value="1"/>
</dbReference>
<dbReference type="FunFam" id="1.10.8.50:FF:000003">
    <property type="entry name" value="Formamidopyrimidine-DNA glycosylase"/>
    <property type="match status" value="1"/>
</dbReference>
<dbReference type="FunFam" id="3.20.190.10:FF:000001">
    <property type="entry name" value="Formamidopyrimidine-DNA glycosylase"/>
    <property type="match status" value="1"/>
</dbReference>
<dbReference type="Gene3D" id="1.10.8.50">
    <property type="match status" value="1"/>
</dbReference>
<dbReference type="Gene3D" id="3.20.190.10">
    <property type="entry name" value="MutM-like, N-terminal"/>
    <property type="match status" value="1"/>
</dbReference>
<dbReference type="HAMAP" id="MF_00103">
    <property type="entry name" value="Fapy_DNA_glycosyl"/>
    <property type="match status" value="1"/>
</dbReference>
<dbReference type="InterPro" id="IPR015886">
    <property type="entry name" value="DNA_glyclase/AP_lyase_DNA-bd"/>
</dbReference>
<dbReference type="InterPro" id="IPR015887">
    <property type="entry name" value="DNA_glyclase_Znf_dom_DNA_BS"/>
</dbReference>
<dbReference type="InterPro" id="IPR020629">
    <property type="entry name" value="Formamido-pyr_DNA_Glyclase"/>
</dbReference>
<dbReference type="InterPro" id="IPR012319">
    <property type="entry name" value="FPG_cat"/>
</dbReference>
<dbReference type="InterPro" id="IPR035937">
    <property type="entry name" value="MutM-like_N-ter"/>
</dbReference>
<dbReference type="InterPro" id="IPR010979">
    <property type="entry name" value="Ribosomal_uS13-like_H2TH"/>
</dbReference>
<dbReference type="InterPro" id="IPR000214">
    <property type="entry name" value="Znf_DNA_glyclase/AP_lyase"/>
</dbReference>
<dbReference type="InterPro" id="IPR010663">
    <property type="entry name" value="Znf_FPG/IleRS"/>
</dbReference>
<dbReference type="NCBIfam" id="TIGR00577">
    <property type="entry name" value="fpg"/>
    <property type="match status" value="1"/>
</dbReference>
<dbReference type="NCBIfam" id="NF002211">
    <property type="entry name" value="PRK01103.1"/>
    <property type="match status" value="1"/>
</dbReference>
<dbReference type="PANTHER" id="PTHR22993">
    <property type="entry name" value="FORMAMIDOPYRIMIDINE-DNA GLYCOSYLASE"/>
    <property type="match status" value="1"/>
</dbReference>
<dbReference type="PANTHER" id="PTHR22993:SF9">
    <property type="entry name" value="FORMAMIDOPYRIMIDINE-DNA GLYCOSYLASE"/>
    <property type="match status" value="1"/>
</dbReference>
<dbReference type="Pfam" id="PF01149">
    <property type="entry name" value="Fapy_DNA_glyco"/>
    <property type="match status" value="1"/>
</dbReference>
<dbReference type="Pfam" id="PF06831">
    <property type="entry name" value="H2TH"/>
    <property type="match status" value="1"/>
</dbReference>
<dbReference type="Pfam" id="PF06827">
    <property type="entry name" value="zf-FPG_IleRS"/>
    <property type="match status" value="1"/>
</dbReference>
<dbReference type="SMART" id="SM00898">
    <property type="entry name" value="Fapy_DNA_glyco"/>
    <property type="match status" value="1"/>
</dbReference>
<dbReference type="SMART" id="SM01232">
    <property type="entry name" value="H2TH"/>
    <property type="match status" value="1"/>
</dbReference>
<dbReference type="SUPFAM" id="SSF57716">
    <property type="entry name" value="Glucocorticoid receptor-like (DNA-binding domain)"/>
    <property type="match status" value="1"/>
</dbReference>
<dbReference type="SUPFAM" id="SSF81624">
    <property type="entry name" value="N-terminal domain of MutM-like DNA repair proteins"/>
    <property type="match status" value="1"/>
</dbReference>
<dbReference type="SUPFAM" id="SSF46946">
    <property type="entry name" value="S13-like H2TH domain"/>
    <property type="match status" value="1"/>
</dbReference>
<dbReference type="PROSITE" id="PS51068">
    <property type="entry name" value="FPG_CAT"/>
    <property type="match status" value="1"/>
</dbReference>
<dbReference type="PROSITE" id="PS01242">
    <property type="entry name" value="ZF_FPG_1"/>
    <property type="match status" value="1"/>
</dbReference>
<dbReference type="PROSITE" id="PS51066">
    <property type="entry name" value="ZF_FPG_2"/>
    <property type="match status" value="1"/>
</dbReference>
<name>FPG_HAEIN</name>
<proteinExistence type="inferred from homology"/>